<dbReference type="EMBL" id="BA000003">
    <property type="protein sequence ID" value="BAB12857.1"/>
    <property type="molecule type" value="Genomic_DNA"/>
</dbReference>
<dbReference type="RefSeq" id="NP_239971.1">
    <property type="nucleotide sequence ID" value="NC_002528.1"/>
</dbReference>
<dbReference type="RefSeq" id="WP_009874095.1">
    <property type="nucleotide sequence ID" value="NZ_AP036055.1"/>
</dbReference>
<dbReference type="STRING" id="563178.BUAP5A_137"/>
<dbReference type="EnsemblBacteria" id="BAB12857">
    <property type="protein sequence ID" value="BAB12857"/>
    <property type="gene ID" value="BAB12857"/>
</dbReference>
<dbReference type="KEGG" id="buc:BU139"/>
<dbReference type="PATRIC" id="fig|107806.10.peg.148"/>
<dbReference type="eggNOG" id="COG0586">
    <property type="taxonomic scope" value="Bacteria"/>
</dbReference>
<dbReference type="HOGENOM" id="CLU_044208_3_2_6"/>
<dbReference type="BioCyc" id="BAPH107806:GBZJ-138-MONOMER"/>
<dbReference type="Proteomes" id="UP000001806">
    <property type="component" value="Chromosome"/>
</dbReference>
<dbReference type="GO" id="GO:0005886">
    <property type="term" value="C:plasma membrane"/>
    <property type="evidence" value="ECO:0007669"/>
    <property type="project" value="UniProtKB-SubCell"/>
</dbReference>
<dbReference type="InterPro" id="IPR032818">
    <property type="entry name" value="DedA-like"/>
</dbReference>
<dbReference type="InterPro" id="IPR032816">
    <property type="entry name" value="VTT_dom"/>
</dbReference>
<dbReference type="PANTHER" id="PTHR30353">
    <property type="entry name" value="INNER MEMBRANE PROTEIN DEDA-RELATED"/>
    <property type="match status" value="1"/>
</dbReference>
<dbReference type="PANTHER" id="PTHR30353:SF15">
    <property type="entry name" value="INNER MEMBRANE PROTEIN YABI"/>
    <property type="match status" value="1"/>
</dbReference>
<dbReference type="Pfam" id="PF09335">
    <property type="entry name" value="VTT_dom"/>
    <property type="match status" value="1"/>
</dbReference>
<proteinExistence type="inferred from homology"/>
<protein>
    <recommendedName>
        <fullName>Uncharacterized membrane protein BU139</fullName>
    </recommendedName>
</protein>
<feature type="chain" id="PRO_0000161424" description="Uncharacterized membrane protein BU139">
    <location>
        <begin position="1"/>
        <end position="256"/>
    </location>
</feature>
<feature type="transmembrane region" description="Helical" evidence="1">
    <location>
        <begin position="6"/>
        <end position="26"/>
    </location>
</feature>
<feature type="transmembrane region" description="Helical" evidence="1">
    <location>
        <begin position="29"/>
        <end position="49"/>
    </location>
</feature>
<feature type="transmembrane region" description="Helical" evidence="1">
    <location>
        <begin position="61"/>
        <end position="81"/>
    </location>
</feature>
<feature type="transmembrane region" description="Helical" evidence="1">
    <location>
        <begin position="145"/>
        <end position="165"/>
    </location>
</feature>
<feature type="transmembrane region" description="Helical" evidence="1">
    <location>
        <begin position="175"/>
        <end position="195"/>
    </location>
</feature>
<feature type="transmembrane region" description="Helical" evidence="1">
    <location>
        <begin position="218"/>
        <end position="238"/>
    </location>
</feature>
<organism>
    <name type="scientific">Buchnera aphidicola subsp. Acyrthosiphon pisum (strain APS)</name>
    <name type="common">Acyrthosiphon pisum symbiotic bacterium</name>
    <dbReference type="NCBI Taxonomy" id="107806"/>
    <lineage>
        <taxon>Bacteria</taxon>
        <taxon>Pseudomonadati</taxon>
        <taxon>Pseudomonadota</taxon>
        <taxon>Gammaproteobacteria</taxon>
        <taxon>Enterobacterales</taxon>
        <taxon>Erwiniaceae</taxon>
        <taxon>Buchnera</taxon>
    </lineage>
</organism>
<name>Y139_BUCAI</name>
<accession>P57239</accession>
<evidence type="ECO:0000255" key="1"/>
<evidence type="ECO:0000305" key="2"/>
<keyword id="KW-1003">Cell membrane</keyword>
<keyword id="KW-0472">Membrane</keyword>
<keyword id="KW-1185">Reference proteome</keyword>
<keyword id="KW-0812">Transmembrane</keyword>
<keyword id="KW-1133">Transmembrane helix</keyword>
<reference key="1">
    <citation type="journal article" date="2000" name="Nature">
        <title>Genome sequence of the endocellular bacterial symbiont of aphids Buchnera sp. APS.</title>
        <authorList>
            <person name="Shigenobu S."/>
            <person name="Watanabe H."/>
            <person name="Hattori M."/>
            <person name="Sakaki Y."/>
            <person name="Ishikawa H."/>
        </authorList>
    </citation>
    <scope>NUCLEOTIDE SEQUENCE [LARGE SCALE GENOMIC DNA]</scope>
    <source>
        <strain>APS</strain>
    </source>
</reference>
<sequence>MESWLTSFITQSLVYSLLVVGIVSFLESLALVGLLLPGIILMTTLGTFIGDGKLSFYPAWISGTTGCLLGDWISYYIGLYFKNWLYNFNFLKKNQKLLDKTKSFLDKHSMLTIILGRFIGPTRPLIPMVSGMLKLPLKKFVFPSIIGCILWPPVYFFPGIVTGIAIKIPESSQSYYFKWLLLLISILIWLGIWLISKWWKMRKNHIDNRTSFFTKKKIGWLAILTMSSGILSLIAIQFHPTMLIFREIFSTILLGT</sequence>
<comment type="subcellular location">
    <subcellularLocation>
        <location evidence="2">Cell membrane</location>
        <topology evidence="2">Multi-pass membrane protein</topology>
    </subcellularLocation>
</comment>
<comment type="similarity">
    <text evidence="2">Belongs to the DedA family.</text>
</comment>
<gene>
    <name type="ordered locus">BU139</name>
</gene>